<sequence length="535" mass="61649">MAGTADCQEHVARPRRPNICRVLRRTGYGKCLICSLLLVLCFFYATYCHVKHEAYSGSQPLLIYQHGPCAQGYNFVPIVFGLMLYIVYLMECWHSRTKIINMKKVRVEDALDYITALRTSPPIVWWKSVCYHYTRKTRQVTRYRNGDAVSATQVYYERVNSHQAGSMFIYDTCGFRDISKSILEVEKFHVTRIRLTRSFVFANMQAATEFEQQRSRFFNDNETKDDYMEVREGMDLSDVGFVEEILAFNCPTPPWFLHPIVFWFFSILVLSWPLRIYTEWRTAVLSFQVVKLFGTHYLSPNSINYTGPLTRTSTMDTVELEALLRREQHFVVPSYSEVMLMQNTIANSNTNFPNLRFLEPVIQPRPLVNTTNEHIVLRNYGATDTENSEQSSTVIPRPPPLRVSRSMTFAEENNDENLGFLENGNRRNRAIPSRGTVPLRSLSIGGISAWSNGYREIGREDSQFLIEPDEPPPPYEVALRMCAPLYERLRRSISSRLASISHSSSKDLKSLTLKNNNGAANNNNNNNNENPEEQP</sequence>
<proteinExistence type="inferred from homology"/>
<gene>
    <name type="ORF">CBG00907</name>
</gene>
<name>TM151_CAEBR</name>
<reference key="1">
    <citation type="journal article" date="2003" name="PLoS Biol.">
        <title>The genome sequence of Caenorhabditis briggsae: a platform for comparative genomics.</title>
        <authorList>
            <person name="Stein L.D."/>
            <person name="Bao Z."/>
            <person name="Blasiar D."/>
            <person name="Blumenthal T."/>
            <person name="Brent M.R."/>
            <person name="Chen N."/>
            <person name="Chinwalla A."/>
            <person name="Clarke L."/>
            <person name="Clee C."/>
            <person name="Coghlan A."/>
            <person name="Coulson A."/>
            <person name="D'Eustachio P."/>
            <person name="Fitch D.H.A."/>
            <person name="Fulton L.A."/>
            <person name="Fulton R.E."/>
            <person name="Griffiths-Jones S."/>
            <person name="Harris T.W."/>
            <person name="Hillier L.W."/>
            <person name="Kamath R."/>
            <person name="Kuwabara P.E."/>
            <person name="Mardis E.R."/>
            <person name="Marra M.A."/>
            <person name="Miner T.L."/>
            <person name="Minx P."/>
            <person name="Mullikin J.C."/>
            <person name="Plumb R.W."/>
            <person name="Rogers J."/>
            <person name="Schein J.E."/>
            <person name="Sohrmann M."/>
            <person name="Spieth J."/>
            <person name="Stajich J.E."/>
            <person name="Wei C."/>
            <person name="Willey D."/>
            <person name="Wilson R.K."/>
            <person name="Durbin R.M."/>
            <person name="Waterston R.H."/>
        </authorList>
    </citation>
    <scope>NUCLEOTIDE SEQUENCE [LARGE SCALE GENOMIC DNA]</scope>
    <source>
        <strain>AF16</strain>
    </source>
</reference>
<accession>Q626N3</accession>
<accession>A8WPC6</accession>
<dbReference type="EMBL" id="HE600951">
    <property type="protein sequence ID" value="CAP22332.1"/>
    <property type="molecule type" value="Genomic_DNA"/>
</dbReference>
<dbReference type="RefSeq" id="XP_002629687.1">
    <property type="nucleotide sequence ID" value="XM_002629641.1"/>
</dbReference>
<dbReference type="FunCoup" id="Q626N3">
    <property type="interactions" value="81"/>
</dbReference>
<dbReference type="EnsemblMetazoa" id="CBG00907a.1">
    <property type="protein sequence ID" value="CBG00907a.1"/>
    <property type="gene ID" value="WBGene00024222"/>
</dbReference>
<dbReference type="GeneID" id="8573317"/>
<dbReference type="KEGG" id="cbr:CBG_00907"/>
<dbReference type="CTD" id="8573317"/>
<dbReference type="WormBase" id="CBG00907a">
    <property type="protein sequence ID" value="CBP05845"/>
    <property type="gene ID" value="WBGene00024222"/>
</dbReference>
<dbReference type="eggNOG" id="ENOG502QSYQ">
    <property type="taxonomic scope" value="Eukaryota"/>
</dbReference>
<dbReference type="HOGENOM" id="CLU_023650_2_0_1"/>
<dbReference type="InParanoid" id="Q626N3"/>
<dbReference type="OMA" id="LMECWHS"/>
<dbReference type="Proteomes" id="UP000008549">
    <property type="component" value="Unassembled WGS sequence"/>
</dbReference>
<dbReference type="GO" id="GO:0016020">
    <property type="term" value="C:membrane"/>
    <property type="evidence" value="ECO:0000318"/>
    <property type="project" value="GO_Central"/>
</dbReference>
<dbReference type="InterPro" id="IPR026767">
    <property type="entry name" value="Tmem151"/>
</dbReference>
<dbReference type="PANTHER" id="PTHR31893">
    <property type="entry name" value="TRANSMEMBRANE PROTEIN 151 HOMOLOG"/>
    <property type="match status" value="1"/>
</dbReference>
<dbReference type="PANTHER" id="PTHR31893:SF5">
    <property type="entry name" value="TRANSMEMBRANE PROTEIN 151 HOMOLOG"/>
    <property type="match status" value="1"/>
</dbReference>
<dbReference type="Pfam" id="PF14857">
    <property type="entry name" value="TMEM151"/>
    <property type="match status" value="1"/>
</dbReference>
<comment type="subcellular location">
    <subcellularLocation>
        <location evidence="3">Membrane</location>
        <topology evidence="3">Multi-pass membrane protein</topology>
    </subcellularLocation>
</comment>
<comment type="similarity">
    <text evidence="3">Belongs to the TMEM151 family.</text>
</comment>
<protein>
    <recommendedName>
        <fullName>Transmembrane protein 151 homolog</fullName>
    </recommendedName>
</protein>
<feature type="chain" id="PRO_0000282988" description="Transmembrane protein 151 homolog">
    <location>
        <begin position="1"/>
        <end position="535"/>
    </location>
</feature>
<feature type="transmembrane region" description="Helical" evidence="1">
    <location>
        <begin position="27"/>
        <end position="47"/>
    </location>
</feature>
<feature type="transmembrane region" description="Helical" evidence="1">
    <location>
        <begin position="73"/>
        <end position="93"/>
    </location>
</feature>
<feature type="transmembrane region" description="Helical" evidence="1">
    <location>
        <begin position="254"/>
        <end position="274"/>
    </location>
</feature>
<feature type="region of interest" description="Disordered" evidence="2">
    <location>
        <begin position="498"/>
        <end position="535"/>
    </location>
</feature>
<feature type="compositionally biased region" description="Low complexity" evidence="2">
    <location>
        <begin position="510"/>
        <end position="529"/>
    </location>
</feature>
<organism>
    <name type="scientific">Caenorhabditis briggsae</name>
    <dbReference type="NCBI Taxonomy" id="6238"/>
    <lineage>
        <taxon>Eukaryota</taxon>
        <taxon>Metazoa</taxon>
        <taxon>Ecdysozoa</taxon>
        <taxon>Nematoda</taxon>
        <taxon>Chromadorea</taxon>
        <taxon>Rhabditida</taxon>
        <taxon>Rhabditina</taxon>
        <taxon>Rhabditomorpha</taxon>
        <taxon>Rhabditoidea</taxon>
        <taxon>Rhabditidae</taxon>
        <taxon>Peloderinae</taxon>
        <taxon>Caenorhabditis</taxon>
    </lineage>
</organism>
<keyword id="KW-0472">Membrane</keyword>
<keyword id="KW-1185">Reference proteome</keyword>
<keyword id="KW-0812">Transmembrane</keyword>
<keyword id="KW-1133">Transmembrane helix</keyword>
<evidence type="ECO:0000255" key="1"/>
<evidence type="ECO:0000256" key="2">
    <source>
        <dbReference type="SAM" id="MobiDB-lite"/>
    </source>
</evidence>
<evidence type="ECO:0000305" key="3"/>